<proteinExistence type="evidence at protein level"/>
<dbReference type="EC" id="3.6.4.13" evidence="6"/>
<dbReference type="EMBL" id="BC002575">
    <property type="protein sequence ID" value="AAH02575.2"/>
    <property type="molecule type" value="mRNA"/>
</dbReference>
<dbReference type="EMBL" id="BC037964">
    <property type="protein sequence ID" value="AAH37964.1"/>
    <property type="molecule type" value="mRNA"/>
</dbReference>
<dbReference type="EMBL" id="AB040950">
    <property type="protein sequence ID" value="BAA96041.1"/>
    <property type="molecule type" value="mRNA"/>
</dbReference>
<dbReference type="CCDS" id="CCDS9261.1"/>
<dbReference type="RefSeq" id="NP_116045.2">
    <property type="nucleotide sequence ID" value="NM_032656.3"/>
</dbReference>
<dbReference type="PDB" id="7MQA">
    <property type="method" value="EM"/>
    <property type="resolution" value="2.70 A"/>
    <property type="chains" value="NS=1-1157"/>
</dbReference>
<dbReference type="PDBsum" id="7MQA"/>
<dbReference type="EMDB" id="EMD-23938"/>
<dbReference type="SMR" id="Q8IY37"/>
<dbReference type="BioGRID" id="121684">
    <property type="interactions" value="219"/>
</dbReference>
<dbReference type="FunCoup" id="Q8IY37">
    <property type="interactions" value="3170"/>
</dbReference>
<dbReference type="IntAct" id="Q8IY37">
    <property type="interactions" value="62"/>
</dbReference>
<dbReference type="MINT" id="Q8IY37"/>
<dbReference type="STRING" id="9606.ENSP00000311135"/>
<dbReference type="GlyGen" id="Q8IY37">
    <property type="glycosylation" value="2 sites, 1 O-linked glycan (1 site)"/>
</dbReference>
<dbReference type="iPTMnet" id="Q8IY37"/>
<dbReference type="MetOSite" id="Q8IY37"/>
<dbReference type="PhosphoSitePlus" id="Q8IY37"/>
<dbReference type="SwissPalm" id="Q8IY37"/>
<dbReference type="BioMuta" id="DHX37"/>
<dbReference type="DMDM" id="38257651"/>
<dbReference type="jPOST" id="Q8IY37"/>
<dbReference type="MassIVE" id="Q8IY37"/>
<dbReference type="PaxDb" id="9606-ENSP00000311135"/>
<dbReference type="PeptideAtlas" id="Q8IY37"/>
<dbReference type="ProteomicsDB" id="71103"/>
<dbReference type="Pumba" id="Q8IY37"/>
<dbReference type="Antibodypedia" id="31893">
    <property type="antibodies" value="43 antibodies from 12 providers"/>
</dbReference>
<dbReference type="DNASU" id="57647"/>
<dbReference type="Ensembl" id="ENST00000308736.7">
    <property type="protein sequence ID" value="ENSP00000311135.2"/>
    <property type="gene ID" value="ENSG00000150990.9"/>
</dbReference>
<dbReference type="GeneID" id="57647"/>
<dbReference type="KEGG" id="hsa:57647"/>
<dbReference type="MANE-Select" id="ENST00000308736.7">
    <property type="protein sequence ID" value="ENSP00000311135.2"/>
    <property type="RefSeq nucleotide sequence ID" value="NM_032656.4"/>
    <property type="RefSeq protein sequence ID" value="NP_116045.2"/>
</dbReference>
<dbReference type="UCSC" id="uc001ugy.4">
    <property type="organism name" value="human"/>
</dbReference>
<dbReference type="AGR" id="HGNC:17210"/>
<dbReference type="CTD" id="57647"/>
<dbReference type="DisGeNET" id="57647"/>
<dbReference type="GeneCards" id="DHX37"/>
<dbReference type="HGNC" id="HGNC:17210">
    <property type="gene designation" value="DHX37"/>
</dbReference>
<dbReference type="HPA" id="ENSG00000150990">
    <property type="expression patterns" value="Low tissue specificity"/>
</dbReference>
<dbReference type="MalaCards" id="DHX37"/>
<dbReference type="MIM" id="273250">
    <property type="type" value="phenotype"/>
</dbReference>
<dbReference type="MIM" id="617362">
    <property type="type" value="gene"/>
</dbReference>
<dbReference type="MIM" id="618731">
    <property type="type" value="phenotype"/>
</dbReference>
<dbReference type="neXtProt" id="NX_Q8IY37"/>
<dbReference type="OpenTargets" id="ENSG00000150990"/>
<dbReference type="Orphanet" id="242">
    <property type="disease" value="46,XY complete gonadal dysgenesis"/>
</dbReference>
<dbReference type="Orphanet" id="251510">
    <property type="disease" value="46,XY partial gonadal dysgenesis"/>
</dbReference>
<dbReference type="Orphanet" id="983">
    <property type="disease" value="Testicular regression syndrome"/>
</dbReference>
<dbReference type="PharmGKB" id="PA27224"/>
<dbReference type="VEuPathDB" id="HostDB:ENSG00000150990"/>
<dbReference type="eggNOG" id="KOG0926">
    <property type="taxonomic scope" value="Eukaryota"/>
</dbReference>
<dbReference type="GeneTree" id="ENSGT00550000074985"/>
<dbReference type="InParanoid" id="Q8IY37"/>
<dbReference type="OMA" id="KYAYHCA"/>
<dbReference type="OrthoDB" id="10025033at2759"/>
<dbReference type="PAN-GO" id="Q8IY37">
    <property type="GO annotations" value="4 GO annotations based on evolutionary models"/>
</dbReference>
<dbReference type="PhylomeDB" id="Q8IY37"/>
<dbReference type="TreeFam" id="TF105654"/>
<dbReference type="PathwayCommons" id="Q8IY37"/>
<dbReference type="Reactome" id="R-HSA-6790901">
    <property type="pathway name" value="rRNA modification in the nucleus and cytosol"/>
</dbReference>
<dbReference type="Reactome" id="R-HSA-6791226">
    <property type="pathway name" value="Major pathway of rRNA processing in the nucleolus and cytosol"/>
</dbReference>
<dbReference type="SignaLink" id="Q8IY37"/>
<dbReference type="BioGRID-ORCS" id="57647">
    <property type="hits" value="783 hits in 1126 CRISPR screens"/>
</dbReference>
<dbReference type="CD-CODE" id="91857CE7">
    <property type="entry name" value="Nucleolus"/>
</dbReference>
<dbReference type="ChiTaRS" id="DHX37">
    <property type="organism name" value="human"/>
</dbReference>
<dbReference type="GenomeRNAi" id="57647"/>
<dbReference type="Pharos" id="Q8IY37">
    <property type="development level" value="Tdark"/>
</dbReference>
<dbReference type="PRO" id="PR:Q8IY37"/>
<dbReference type="Proteomes" id="UP000005640">
    <property type="component" value="Chromosome 12"/>
</dbReference>
<dbReference type="RNAct" id="Q8IY37">
    <property type="molecule type" value="protein"/>
</dbReference>
<dbReference type="Bgee" id="ENSG00000150990">
    <property type="expression patterns" value="Expressed in tendon of biceps brachii and 166 other cell types or tissues"/>
</dbReference>
<dbReference type="ExpressionAtlas" id="Q8IY37">
    <property type="expression patterns" value="baseline and differential"/>
</dbReference>
<dbReference type="GO" id="GO:0005737">
    <property type="term" value="C:cytoplasm"/>
    <property type="evidence" value="ECO:0000314"/>
    <property type="project" value="UniProtKB"/>
</dbReference>
<dbReference type="GO" id="GO:0031965">
    <property type="term" value="C:nuclear membrane"/>
    <property type="evidence" value="ECO:0000314"/>
    <property type="project" value="UniProtKB"/>
</dbReference>
<dbReference type="GO" id="GO:0005730">
    <property type="term" value="C:nucleolus"/>
    <property type="evidence" value="ECO:0000314"/>
    <property type="project" value="UniProtKB"/>
</dbReference>
<dbReference type="GO" id="GO:0005654">
    <property type="term" value="C:nucleoplasm"/>
    <property type="evidence" value="ECO:0000304"/>
    <property type="project" value="Reactome"/>
</dbReference>
<dbReference type="GO" id="GO:0032040">
    <property type="term" value="C:small-subunit processome"/>
    <property type="evidence" value="ECO:0000314"/>
    <property type="project" value="UniProtKB"/>
</dbReference>
<dbReference type="GO" id="GO:0005524">
    <property type="term" value="F:ATP binding"/>
    <property type="evidence" value="ECO:0007669"/>
    <property type="project" value="UniProtKB-KW"/>
</dbReference>
<dbReference type="GO" id="GO:0016887">
    <property type="term" value="F:ATP hydrolysis activity"/>
    <property type="evidence" value="ECO:0007669"/>
    <property type="project" value="RHEA"/>
</dbReference>
<dbReference type="GO" id="GO:0004386">
    <property type="term" value="F:helicase activity"/>
    <property type="evidence" value="ECO:0000318"/>
    <property type="project" value="GO_Central"/>
</dbReference>
<dbReference type="GO" id="GO:0003723">
    <property type="term" value="F:RNA binding"/>
    <property type="evidence" value="ECO:0000318"/>
    <property type="project" value="GO_Central"/>
</dbReference>
<dbReference type="GO" id="GO:0003724">
    <property type="term" value="F:RNA helicase activity"/>
    <property type="evidence" value="ECO:0007669"/>
    <property type="project" value="UniProtKB-EC"/>
</dbReference>
<dbReference type="GO" id="GO:0034511">
    <property type="term" value="F:U3 snoRNA binding"/>
    <property type="evidence" value="ECO:0000314"/>
    <property type="project" value="UniProtKB"/>
</dbReference>
<dbReference type="GO" id="GO:0007420">
    <property type="term" value="P:brain development"/>
    <property type="evidence" value="ECO:0000315"/>
    <property type="project" value="UniProtKB"/>
</dbReference>
<dbReference type="GO" id="GO:0000462">
    <property type="term" value="P:maturation of SSU-rRNA from tricistronic rRNA transcript (SSU-rRNA, 5.8S rRNA, LSU-rRNA)"/>
    <property type="evidence" value="ECO:0000318"/>
    <property type="project" value="GO_Central"/>
</dbReference>
<dbReference type="GO" id="GO:2000020">
    <property type="term" value="P:positive regulation of male gonad development"/>
    <property type="evidence" value="ECO:0000314"/>
    <property type="project" value="UniProtKB"/>
</dbReference>
<dbReference type="GO" id="GO:0042274">
    <property type="term" value="P:ribosomal small subunit biogenesis"/>
    <property type="evidence" value="ECO:0000314"/>
    <property type="project" value="UniProtKB"/>
</dbReference>
<dbReference type="GO" id="GO:0042255">
    <property type="term" value="P:ribosome assembly"/>
    <property type="evidence" value="ECO:0000314"/>
    <property type="project" value="UniProtKB"/>
</dbReference>
<dbReference type="GO" id="GO:0042254">
    <property type="term" value="P:ribosome biogenesis"/>
    <property type="evidence" value="ECO:0000314"/>
    <property type="project" value="UniProtKB"/>
</dbReference>
<dbReference type="CDD" id="cd17982">
    <property type="entry name" value="DEXHc_DHX37"/>
    <property type="match status" value="1"/>
</dbReference>
<dbReference type="CDD" id="cd18791">
    <property type="entry name" value="SF2_C_RHA"/>
    <property type="match status" value="1"/>
</dbReference>
<dbReference type="FunFam" id="1.20.120.1080:FF:000014">
    <property type="entry name" value="Probable ATP-dependent RNA helicase DHX37"/>
    <property type="match status" value="1"/>
</dbReference>
<dbReference type="FunFam" id="3.40.50.300:FF:000895">
    <property type="entry name" value="probable ATP-dependent RNA helicase DHX37"/>
    <property type="match status" value="1"/>
</dbReference>
<dbReference type="Gene3D" id="1.20.120.1080">
    <property type="match status" value="1"/>
</dbReference>
<dbReference type="Gene3D" id="3.40.50.300">
    <property type="entry name" value="P-loop containing nucleotide triphosphate hydrolases"/>
    <property type="match status" value="2"/>
</dbReference>
<dbReference type="InterPro" id="IPR011709">
    <property type="entry name" value="DEAD-box_helicase_OB_fold"/>
</dbReference>
<dbReference type="InterPro" id="IPR011545">
    <property type="entry name" value="DEAD/DEAH_box_helicase_dom"/>
</dbReference>
<dbReference type="InterPro" id="IPR056371">
    <property type="entry name" value="DHX37-like_C"/>
</dbReference>
<dbReference type="InterPro" id="IPR048333">
    <property type="entry name" value="HA2_WH"/>
</dbReference>
<dbReference type="InterPro" id="IPR007502">
    <property type="entry name" value="Helicase-assoc_dom"/>
</dbReference>
<dbReference type="InterPro" id="IPR014001">
    <property type="entry name" value="Helicase_ATP-bd"/>
</dbReference>
<dbReference type="InterPro" id="IPR001650">
    <property type="entry name" value="Helicase_C-like"/>
</dbReference>
<dbReference type="InterPro" id="IPR027417">
    <property type="entry name" value="P-loop_NTPase"/>
</dbReference>
<dbReference type="PANTHER" id="PTHR18934">
    <property type="entry name" value="ATP-DEPENDENT RNA HELICASE"/>
    <property type="match status" value="1"/>
</dbReference>
<dbReference type="PANTHER" id="PTHR18934:SF99">
    <property type="entry name" value="ATP-DEPENDENT RNA HELICASE DHX37-RELATED"/>
    <property type="match status" value="1"/>
</dbReference>
<dbReference type="Pfam" id="PF00270">
    <property type="entry name" value="DEAD"/>
    <property type="match status" value="1"/>
</dbReference>
<dbReference type="Pfam" id="PF23362">
    <property type="entry name" value="DHX37_C"/>
    <property type="match status" value="1"/>
</dbReference>
<dbReference type="Pfam" id="PF21010">
    <property type="entry name" value="HA2_C"/>
    <property type="match status" value="1"/>
</dbReference>
<dbReference type="Pfam" id="PF04408">
    <property type="entry name" value="HA2_N"/>
    <property type="match status" value="1"/>
</dbReference>
<dbReference type="Pfam" id="PF00271">
    <property type="entry name" value="Helicase_C"/>
    <property type="match status" value="1"/>
</dbReference>
<dbReference type="Pfam" id="PF07717">
    <property type="entry name" value="OB_NTP_bind"/>
    <property type="match status" value="1"/>
</dbReference>
<dbReference type="SMART" id="SM00487">
    <property type="entry name" value="DEXDc"/>
    <property type="match status" value="1"/>
</dbReference>
<dbReference type="SMART" id="SM00847">
    <property type="entry name" value="HA2"/>
    <property type="match status" value="1"/>
</dbReference>
<dbReference type="SMART" id="SM00490">
    <property type="entry name" value="HELICc"/>
    <property type="match status" value="1"/>
</dbReference>
<dbReference type="SUPFAM" id="SSF52540">
    <property type="entry name" value="P-loop containing nucleoside triphosphate hydrolases"/>
    <property type="match status" value="1"/>
</dbReference>
<dbReference type="PROSITE" id="PS51192">
    <property type="entry name" value="HELICASE_ATP_BIND_1"/>
    <property type="match status" value="1"/>
</dbReference>
<dbReference type="PROSITE" id="PS51194">
    <property type="entry name" value="HELICASE_CTER"/>
    <property type="match status" value="1"/>
</dbReference>
<feature type="chain" id="PRO_0000055172" description="Probable ATP-dependent RNA helicase DHX37">
    <location>
        <begin position="1"/>
        <end position="1157"/>
    </location>
</feature>
<feature type="domain" description="Helicase ATP-binding" evidence="1">
    <location>
        <begin position="262"/>
        <end position="429"/>
    </location>
</feature>
<feature type="domain" description="Helicase C-terminal" evidence="2">
    <location>
        <begin position="459"/>
        <end position="716"/>
    </location>
</feature>
<feature type="region of interest" description="Disordered" evidence="3">
    <location>
        <begin position="1"/>
        <end position="77"/>
    </location>
</feature>
<feature type="region of interest" description="Disordered" evidence="3">
    <location>
        <begin position="116"/>
        <end position="225"/>
    </location>
</feature>
<feature type="region of interest" description="Disordered" evidence="3">
    <location>
        <begin position="494"/>
        <end position="523"/>
    </location>
</feature>
<feature type="region of interest" description="Disordered" evidence="3">
    <location>
        <begin position="542"/>
        <end position="584"/>
    </location>
</feature>
<feature type="short sequence motif" description="DEAH box">
    <location>
        <begin position="372"/>
        <end position="375"/>
    </location>
</feature>
<feature type="compositionally biased region" description="Basic residues" evidence="3">
    <location>
        <begin position="1"/>
        <end position="10"/>
    </location>
</feature>
<feature type="compositionally biased region" description="Pro residues" evidence="3">
    <location>
        <begin position="21"/>
        <end position="30"/>
    </location>
</feature>
<feature type="compositionally biased region" description="Acidic residues" evidence="3">
    <location>
        <begin position="159"/>
        <end position="184"/>
    </location>
</feature>
<feature type="compositionally biased region" description="Pro residues" evidence="3">
    <location>
        <begin position="198"/>
        <end position="208"/>
    </location>
</feature>
<feature type="compositionally biased region" description="Pro residues" evidence="3">
    <location>
        <begin position="216"/>
        <end position="225"/>
    </location>
</feature>
<feature type="compositionally biased region" description="Basic and acidic residues" evidence="3">
    <location>
        <begin position="499"/>
        <end position="515"/>
    </location>
</feature>
<feature type="compositionally biased region" description="Acidic residues" evidence="3">
    <location>
        <begin position="547"/>
        <end position="571"/>
    </location>
</feature>
<feature type="binding site" evidence="1">
    <location>
        <begin position="275"/>
        <end position="282"/>
    </location>
    <ligand>
        <name>ATP</name>
        <dbReference type="ChEBI" id="CHEBI:30616"/>
    </ligand>
</feature>
<feature type="sequence variant" id="VAR_083628" description="In NEDBAVC; uncertain significance; dbSNP:rs575837056." evidence="7">
    <original>R</original>
    <variation>Q</variation>
    <location>
        <position position="93"/>
    </location>
</feature>
<feature type="sequence variant" id="VAR_061826" description="In dbSNP:rs11558556.">
    <original>M</original>
    <variation>I</variation>
    <location>
        <position position="96"/>
    </location>
</feature>
<feature type="sequence variant" id="VAR_083629" description="In NEDBAVC; uncertain significance; requires 2 nucleotide substitutions." evidence="7">
    <original>E</original>
    <variation>S</variation>
    <location>
        <position position="167"/>
    </location>
</feature>
<feature type="sequence variant" id="VAR_083630" description="In SRXY11; dbSNP:rs1954619788." evidence="8 9">
    <original>T</original>
    <variation>M</variation>
    <location>
        <position position="304"/>
    </location>
</feature>
<feature type="sequence variant" id="VAR_083631" description="In SRXY11; dbSNP:rs1384892917." evidence="8 9">
    <original>R</original>
    <variation>Q</variation>
    <location>
        <position position="308"/>
    </location>
</feature>
<feature type="sequence variant" id="VAR_083632" description="In SRXY11; uncertain significance." evidence="9">
    <original>R</original>
    <variation>L</variation>
    <location>
        <position position="334"/>
    </location>
</feature>
<feature type="sequence variant" id="VAR_083633" description="In SRXY11; uncertain significance." evidence="9">
    <original>R</original>
    <variation>W</variation>
    <location>
        <position position="334"/>
    </location>
</feature>
<feature type="sequence variant" id="VAR_083634" description="In NEDBAVC; uncertain significance; dbSNP:rs1424699115." evidence="7">
    <original>D</original>
    <variation>G</variation>
    <location>
        <position position="382"/>
    </location>
</feature>
<feature type="sequence variant" id="VAR_083635" description="In NEDBAVC; uncertain significance; dbSNP:rs1060499737." evidence="5 7">
    <original>N</original>
    <variation>K</variation>
    <location>
        <position position="419"/>
    </location>
</feature>
<feature type="sequence variant" id="VAR_052185" description="In dbSNP:rs11057939.">
    <original>R</original>
    <variation>Q</variation>
    <location>
        <position position="458"/>
    </location>
</feature>
<feature type="sequence variant" id="VAR_083636" description="In NEDBAVC; uncertain significance; dbSNP:rs149331610." evidence="7">
    <original>L</original>
    <variation>V</variation>
    <location>
        <position position="467"/>
    </location>
</feature>
<feature type="sequence variant" id="VAR_083637" description="In NEDBAVC; uncertain significance; dbSNP:rs779613772." evidence="5">
    <original>R</original>
    <variation>H</variation>
    <location>
        <position position="487"/>
    </location>
</feature>
<feature type="sequence variant" id="VAR_052186" description="In dbSNP:rs35165507.">
    <original>K</original>
    <variation>N</variation>
    <location>
        <position position="508"/>
    </location>
</feature>
<feature type="sequence variant" id="VAR_083638" description="In SRXY11; dbSNP:rs1954346640." evidence="8">
    <original>S</original>
    <variation>F</variation>
    <location>
        <position position="595"/>
    </location>
</feature>
<feature type="sequence variant" id="VAR_083639" description="In SRXY11; uncertain significance; dbSNP:rs2135945152." evidence="9">
    <original>S</original>
    <variation>L</variation>
    <location>
        <position position="626"/>
    </location>
</feature>
<feature type="sequence variant" id="VAR_083640" description="In SRXY11; dbSNP:rs1954336215." evidence="9">
    <original>R</original>
    <variation>Q</variation>
    <location>
        <position position="674"/>
    </location>
</feature>
<feature type="sequence variant" id="VAR_083641" description="In SRXY11; dbSNP:rs1954336272." evidence="8">
    <original>R</original>
    <variation>W</variation>
    <location>
        <position position="674"/>
    </location>
</feature>
<feature type="sequence variant" id="VAR_052187" description="In dbSNP:rs35016004.">
    <original>V</original>
    <variation>I</variation>
    <location>
        <position position="717"/>
    </location>
</feature>
<feature type="sequence variant" id="VAR_083642" description="In NEDBAVC; uncertain significance; dbSNP:rs754186165." evidence="7">
    <original>V</original>
    <variation>M</variation>
    <location>
        <position position="731"/>
    </location>
</feature>
<feature type="sequence variant" id="VAR_052188" description="In dbSNP:rs4516060." evidence="4">
    <original>S</original>
    <variation>G</variation>
    <location>
        <position position="869"/>
    </location>
</feature>
<feature type="sequence variant" id="VAR_083643" description="In SRXY11; uncertain significance; dbSNP:rs754141645." evidence="9">
    <original>G</original>
    <variation>E</variation>
    <location>
        <position position="1030"/>
    </location>
</feature>
<feature type="sequence variant" id="VAR_052189" description="In dbSNP:rs4447263." evidence="4">
    <original>R</original>
    <variation>Q</variation>
    <location>
        <position position="1081"/>
    </location>
</feature>
<feature type="sequence variant" id="VAR_083644" description="In NEDBAVC; uncertain significance; dbSNP:rs1277857720." evidence="7">
    <original>T</original>
    <variation>M</variation>
    <location>
        <position position="1094"/>
    </location>
</feature>
<feature type="mutagenesis site" description="Impairs the catalytic activity of the helicase." evidence="6">
    <original>T</original>
    <variation>A</variation>
    <location>
        <position position="282"/>
    </location>
</feature>
<feature type="sequence conflict" description="In Ref. 1; AAH02575." evidence="11" ref="1">
    <original>E</original>
    <variation>R</variation>
    <location>
        <position position="174"/>
    </location>
</feature>
<feature type="sequence conflict" description="In Ref. 2; BAA96041." evidence="11" ref="2">
    <original>A</original>
    <variation>S</variation>
    <location>
        <position position="898"/>
    </location>
</feature>
<feature type="sequence conflict" description="In Ref. 2." evidence="11" ref="2">
    <original>YLLAEYCEWLPQAMHPDIEKAWPPTTVH</original>
    <variation>CEFDQGQGVGVDRMGSLRQGLCALCTVSPGLAEGSGPTAAGQLFAT</variation>
    <location>
        <begin position="1130"/>
        <end position="1157"/>
    </location>
</feature>
<evidence type="ECO:0000255" key="1">
    <source>
        <dbReference type="PROSITE-ProRule" id="PRU00541"/>
    </source>
</evidence>
<evidence type="ECO:0000255" key="2">
    <source>
        <dbReference type="PROSITE-ProRule" id="PRU00542"/>
    </source>
</evidence>
<evidence type="ECO:0000256" key="3">
    <source>
        <dbReference type="SAM" id="MobiDB-lite"/>
    </source>
</evidence>
<evidence type="ECO:0000269" key="4">
    <source>
    </source>
</evidence>
<evidence type="ECO:0000269" key="5">
    <source>
    </source>
</evidence>
<evidence type="ECO:0000269" key="6">
    <source>
    </source>
</evidence>
<evidence type="ECO:0000269" key="7">
    <source>
    </source>
</evidence>
<evidence type="ECO:0000269" key="8">
    <source>
    </source>
</evidence>
<evidence type="ECO:0000269" key="9">
    <source>
    </source>
</evidence>
<evidence type="ECO:0000269" key="10">
    <source>
    </source>
</evidence>
<evidence type="ECO:0000305" key="11"/>
<evidence type="ECO:0000312" key="12">
    <source>
        <dbReference type="HGNC" id="HGNC:17210"/>
    </source>
</evidence>
<evidence type="ECO:0007744" key="13">
    <source>
        <dbReference type="PDB" id="7MQA"/>
    </source>
</evidence>
<name>DHX37_HUMAN</name>
<accession>Q8IY37</accession>
<accession>Q9BUI7</accession>
<accession>Q9P211</accession>
<gene>
    <name evidence="12" type="primary">DHX37</name>
    <name type="synonym">DDX37</name>
    <name type="synonym">KIAA1517</name>
</gene>
<sequence length="1157" mass="129545">MGKLRRRYNIKGRQQAGPGPSKGPPEPPPVQLELEDKDTLKGVDASNALVLPGKKKKKTKAPPLSKKEKKPLTKKEKKVLQKILEQKEKKSQRAEMLQKLSEVQASEAEMRLFYTTSKLGTGNRMYHTKEKADEVVAPGQEKISSLSGAHRKRRRWPSAEEEEEEEEESESELEEESELDEDPAAEPAEAGVGTTVAPLPPAPAPSSQPVPAGMTVPPPPAAAPPLPRALAKPAVFIPVNRSPEMQEERLKLPILSEEQVIMEAVAEHPIVIVCGETGSGKTTQVPQFLYEAGFSSEDSIIGVTEPRRVAAVAMSQRVAKEMNLSQRVVSYQIRYEGNVTEETRIKFMTDGVLLKEIQKDFLLLRYKVVIIDEAHERSVYTDILIGLLSRIVTLRAKRNLPLKLLIMSATLRVEDFTQNPRLFAKPPPVIKVESRQFPVTVHFNKRTPLEDYSGECFRKVCKIHRMLPAGGILVFLTGQAEVHALCRRLRKAFPPSRARPQEKDDDQKDSVEEMRKFKKSRARAKKARAEVLPQINLDHYSVLPAGEGDEDREAEVDEEEGALDSDLDLDLGDGGQDGGEQPDASLPLHVLPLYSLLAPEKQAQVFKPPPEGTRLCVVATNVAETSLTIPGIKYVVDCGKVKKRYYDRVTGVSSFRVTWVSQASADQRAGRAGRTEPGHCYRLYSSAVFGDFEQFPPPEITRRPVEDLILQMKALNVEKVINFPFPTPPSVEALLAAEELLIALGALQPPQKAERVKQLQENRLSCPITALGRTMATFPVAPRYAKMLALSRQHGCLPYAITIVASMTVRELFEELDRPAASDEELTRLKSKRARVAQMKRTWAGQGASLKLGDLMVLLGAVGACEYASCTPQFCEANGLRYKAMMEIRRLRGQLTTAVNAVCPEAELFVDPKMQPPTESQVTYLRQIVTAGLGDHLARRVQSEEMLEDKWRNAYKTPLLDDPVFIHPSSVLFKELPEFVVYQEIVETTKMYMKGVSSVEVQWIPALLPSYCQFDKPLEEPAPTYCPERGRVLCHRASVFYRVGWPLPAIEVDFPEGIDRYKHFARFLLEGQVFRKLASYRSCLLSSPGTMLKTWARLQPRTESLLRALVAEKADCHEALLAAWKKNPKYLLAEYCEWLPQAMHPDIEKAWPPTTVH</sequence>
<comment type="function">
    <text evidence="6 7 8 9 10">ATP-binding RNA helicase that plays a role in maturation of the small ribosomal subunit in ribosome biogenesis (PubMed:30582406). Required for the release of the U3 snoRNP from pre-ribosomal particles (PubMed:30582406). Part of the small subunit (SSU) processome, first precursor of the small eukaryotic ribosomal subunit. During the assembly of the SSU processome in the nucleolus, many ribosome biogenesis factors, an RNA chaperone and ribosomal proteins associate with the nascent pre-rRNA and work in concert to generate RNA folding, modifications, rearrangements and cleavage as well as targeted degradation of pre-ribosomal RNA by the RNA exosome (PubMed:34516797). Plays a role in early testis development (PubMed:31287541, PubMed:31337883). Probably also plays a role in brain development (PubMed:31256877).</text>
</comment>
<comment type="catalytic activity">
    <reaction evidence="6">
        <text>ATP + H2O = ADP + phosphate + H(+)</text>
        <dbReference type="Rhea" id="RHEA:13065"/>
        <dbReference type="ChEBI" id="CHEBI:15377"/>
        <dbReference type="ChEBI" id="CHEBI:15378"/>
        <dbReference type="ChEBI" id="CHEBI:30616"/>
        <dbReference type="ChEBI" id="CHEBI:43474"/>
        <dbReference type="ChEBI" id="CHEBI:456216"/>
        <dbReference type="EC" id="3.6.4.13"/>
    </reaction>
</comment>
<comment type="subunit">
    <text evidence="6 10">Part of the small subunit (SSU) processome, composed of more than 70 proteins and the RNA chaperone small nucleolar RNA (snoRNA) U3 (PubMed:34516797). Interacts with UTP14A (PubMed:30582406).</text>
</comment>
<comment type="subcellular location">
    <subcellularLocation>
        <location evidence="6 9 10">Nucleus</location>
        <location evidence="6 9 10">Nucleolus</location>
    </subcellularLocation>
    <subcellularLocation>
        <location evidence="9">Cytoplasm</location>
    </subcellularLocation>
    <subcellularLocation>
        <location evidence="9">Nucleus membrane</location>
    </subcellularLocation>
</comment>
<comment type="tissue specificity">
    <text evidence="7 9">Expressed in the fallopian tube, ovary, uterus and testis. Also expressed in the brain.</text>
</comment>
<comment type="disease" evidence="5 7">
    <disease id="DI-05732">
        <name>Neurodevelopmental disorder with brain anomalies and with or without vertebral or cardiac anomalies</name>
        <acronym>NEDBAVC</acronym>
        <description>An autosomal recessive neurodevelopmental disorder characterized by severe developmental delay, impaired intellectual development, hypotonia, brain anomalies including cortical volume loss, corpus callosum dysgenesis and cerebellar hypoplasia, and variable dysmorphic features. Patients may have platyspondyly, scoliosis, and cardiac anomalies.</description>
        <dbReference type="MIM" id="618731"/>
    </disease>
    <text>The disease may be caused by variants affecting the gene represented in this entry.</text>
</comment>
<comment type="disease" evidence="8 9">
    <disease id="DI-05803">
        <name>46,XY sex reversal 11</name>
        <acronym>SRXY11</acronym>
        <description>An autosomal dominant disorder of sex development. Affected individuals have a 46,XY karyotype and a genital phenotype that may range from predominantly female to predominantly male, including marked sex ambiguity. Approximately half of patients present with micropenis and bilateral or unilateral cryptorchidism, and half present with female-appearing or ambiguous external genitalia.</description>
        <dbReference type="MIM" id="273250"/>
    </disease>
    <text>The disease is caused by variants affecting the gene represented in this entry.</text>
</comment>
<comment type="similarity">
    <text evidence="11">Belongs to the DEAD box helicase family. DEAH subfamily.</text>
</comment>
<keyword id="KW-0002">3D-structure</keyword>
<keyword id="KW-0067">ATP-binding</keyword>
<keyword id="KW-0963">Cytoplasm</keyword>
<keyword id="KW-0225">Disease variant</keyword>
<keyword id="KW-0347">Helicase</keyword>
<keyword id="KW-0378">Hydrolase</keyword>
<keyword id="KW-0991">Intellectual disability</keyword>
<keyword id="KW-0472">Membrane</keyword>
<keyword id="KW-0547">Nucleotide-binding</keyword>
<keyword id="KW-0539">Nucleus</keyword>
<keyword id="KW-1267">Proteomics identification</keyword>
<keyword id="KW-1185">Reference proteome</keyword>
<organism>
    <name type="scientific">Homo sapiens</name>
    <name type="common">Human</name>
    <dbReference type="NCBI Taxonomy" id="9606"/>
    <lineage>
        <taxon>Eukaryota</taxon>
        <taxon>Metazoa</taxon>
        <taxon>Chordata</taxon>
        <taxon>Craniata</taxon>
        <taxon>Vertebrata</taxon>
        <taxon>Euteleostomi</taxon>
        <taxon>Mammalia</taxon>
        <taxon>Eutheria</taxon>
        <taxon>Euarchontoglires</taxon>
        <taxon>Primates</taxon>
        <taxon>Haplorrhini</taxon>
        <taxon>Catarrhini</taxon>
        <taxon>Hominidae</taxon>
        <taxon>Homo</taxon>
    </lineage>
</organism>
<reference key="1">
    <citation type="journal article" date="2004" name="Genome Res.">
        <title>The status, quality, and expansion of the NIH full-length cDNA project: the Mammalian Gene Collection (MGC).</title>
        <authorList>
            <consortium name="The MGC Project Team"/>
        </authorList>
    </citation>
    <scope>NUCLEOTIDE SEQUENCE [LARGE SCALE MRNA]</scope>
    <scope>VARIANTS GLY-869 AND GLN-1081</scope>
    <source>
        <tissue>Brain</tissue>
        <tissue>Duodenum</tissue>
    </source>
</reference>
<reference key="2">
    <citation type="journal article" date="2000" name="DNA Res.">
        <title>Prediction of the coding sequences of unidentified human genes. XVII. The complete sequences of 100 new cDNA clones from brain which code for large proteins in vitro.</title>
        <authorList>
            <person name="Nagase T."/>
            <person name="Kikuno R."/>
            <person name="Ishikawa K."/>
            <person name="Hirosawa M."/>
            <person name="Ohara O."/>
        </authorList>
    </citation>
    <scope>NUCLEOTIDE SEQUENCE [LARGE SCALE MRNA] OF 178-1157</scope>
    <source>
        <tissue>Brain</tissue>
    </source>
</reference>
<reference key="3">
    <citation type="journal article" date="2011" name="BMC Syst. Biol.">
        <title>Initial characterization of the human central proteome.</title>
        <authorList>
            <person name="Burkard T.R."/>
            <person name="Planyavsky M."/>
            <person name="Kaupe I."/>
            <person name="Breitwieser F.P."/>
            <person name="Buerckstuemmer T."/>
            <person name="Bennett K.L."/>
            <person name="Superti-Furga G."/>
            <person name="Colinge J."/>
        </authorList>
    </citation>
    <scope>IDENTIFICATION BY MASS SPECTROMETRY [LARGE SCALE ANALYSIS]</scope>
</reference>
<reference key="4">
    <citation type="journal article" date="2015" name="Neuron">
        <title>Genes that affect brain structure and function identified by rare variant analyses of mendelian neurologic disease.</title>
        <authorList>
            <person name="Karaca E."/>
            <person name="Harel T."/>
            <person name="Pehlivan D."/>
            <person name="Jhangiani S.N."/>
            <person name="Gambin T."/>
            <person name="Coban Akdemir Z."/>
            <person name="Gonzaga-Jauregui C."/>
            <person name="Erdin S."/>
            <person name="Bayram Y."/>
            <person name="Campbell I.M."/>
            <person name="Hunter J.V."/>
            <person name="Atik M.M."/>
            <person name="Van Esch H."/>
            <person name="Yuan B."/>
            <person name="Wiszniewski W."/>
            <person name="Isikay S."/>
            <person name="Yesil G."/>
            <person name="Yuregir O.O."/>
            <person name="Tug Bozdogan S."/>
            <person name="Aslan H."/>
            <person name="Aydin H."/>
            <person name="Tos T."/>
            <person name="Aksoy A."/>
            <person name="De Vivo D.C."/>
            <person name="Jain P."/>
            <person name="Geckinli B.B."/>
            <person name="Sezer O."/>
            <person name="Gul D."/>
            <person name="Durmaz B."/>
            <person name="Cogulu O."/>
            <person name="Ozkinay F."/>
            <person name="Topcu V."/>
            <person name="Candan S."/>
            <person name="Cebi A.H."/>
            <person name="Ikbal M."/>
            <person name="Yilmaz Gulec E."/>
            <person name="Gezdirici A."/>
            <person name="Koparir E."/>
            <person name="Ekici F."/>
            <person name="Coskun S."/>
            <person name="Cicek S."/>
            <person name="Karaer K."/>
            <person name="Koparir A."/>
            <person name="Duz M.B."/>
            <person name="Kirat E."/>
            <person name="Fenercioglu E."/>
            <person name="Ulucan H."/>
            <person name="Seven M."/>
            <person name="Guran T."/>
            <person name="Elcioglu N."/>
            <person name="Yildirim M.S."/>
            <person name="Aktas D."/>
            <person name="Alikasifoglu M."/>
            <person name="Ture M."/>
            <person name="Yakut T."/>
            <person name="Overton J.D."/>
            <person name="Yuksel A."/>
            <person name="Ozen M."/>
            <person name="Muzny D.M."/>
            <person name="Adams D.R."/>
            <person name="Boerwinkle E."/>
            <person name="Chung W.K."/>
            <person name="Gibbs R.A."/>
            <person name="Lupski J.R."/>
        </authorList>
    </citation>
    <scope>INVOLVEMENT IN NEDBAVC</scope>
    <scope>VARIANTS NEDBAVC LYS-419 AND HIS-487</scope>
</reference>
<reference key="5">
    <citation type="journal article" date="2019" name="J. Clin. Endocrinol. Metab.">
        <title>Genetic evidence of the association of DEAH-box helicase 37 defects with 46,XY gonadal dysgenesis spectrum.</title>
        <authorList>
            <person name="da Silva T.E."/>
            <person name="Gomes N.L."/>
            <person name="Lerario A.M."/>
            <person name="Keegan C.E."/>
            <person name="Nishi M.Y."/>
            <person name="Carvalho F.M."/>
            <person name="Vilain E."/>
            <person name="Barseghyan H."/>
            <person name="Martinez-Aguayo A."/>
            <person name="Forclaz M.V."/>
            <person name="Papazian R."/>
            <person name="Pedroso de Paula L.C."/>
            <person name="Costa E.C."/>
            <person name="Carvalho L.R."/>
            <person name="Jorge A.A.L."/>
            <person name="Elias F.M."/>
            <person name="Mitchell R."/>
            <person name="Costa E.M.F."/>
            <person name="Mendonca B.B."/>
            <person name="Domenice S."/>
        </authorList>
    </citation>
    <scope>INVOLVEMENT IN SRXY11</scope>
    <scope>VARIANTS SRXY11 MET-304; GLN-308; PHE-595 AND TRP-674</scope>
    <scope>FUNCTION</scope>
</reference>
<reference key="6">
    <citation type="journal article" date="2019" name="RNA Biol.">
        <title>The human RNA helicase DHX37 is required for release of the U3 snoRNP from pre-ribosomal particles.</title>
        <authorList>
            <person name="Choudhury P."/>
            <person name="Hackert P."/>
            <person name="Memet I."/>
            <person name="Sloan K.E."/>
            <person name="Bohnsack M.T."/>
        </authorList>
    </citation>
    <scope>FUNCTION</scope>
    <scope>CATALYTIC ACTIVITY</scope>
    <scope>SUBCELLULAR LOCATION</scope>
    <scope>INTERACTION WITH UTP14A</scope>
    <scope>MUTAGENESIS OF THR-282</scope>
</reference>
<reference key="7">
    <citation type="journal article" date="2019" name="Am. J. Hum. Genet.">
        <title>Paralog studies augment gene discovery: DDX and DHX genes.</title>
        <authorList>
            <consortium name="University of Washington Center for Mendelian Genomics, Baylor-Hopkins Center for Mendelian Genomics, Telethon Undiagnosed Diseases Program"/>
            <person name="Paine I."/>
            <person name="Posey J.E."/>
            <person name="Grochowski C.M."/>
            <person name="Jhangiani S.N."/>
            <person name="Rosenheck S."/>
            <person name="Kleyner R."/>
            <person name="Marmorale T."/>
            <person name="Yoon M."/>
            <person name="Wang K."/>
            <person name="Robison R."/>
            <person name="Cappuccio G."/>
            <person name="Pinelli M."/>
            <person name="Magli A."/>
            <person name="Coban Akdemir Z."/>
            <person name="Hui J."/>
            <person name="Yeung W.L."/>
            <person name="Wong B.K.Y."/>
            <person name="Ortega L."/>
            <person name="Bekheirnia M.R."/>
            <person name="Bierhals T."/>
            <person name="Hempel M."/>
            <person name="Johannsen J."/>
            <person name="Santer R."/>
            <person name="Aktas D."/>
            <person name="Alikasifoglu M."/>
            <person name="Bozdogan S."/>
            <person name="Aydin H."/>
            <person name="Karaca E."/>
            <person name="Bayram Y."/>
            <person name="Ityel H."/>
            <person name="Dorschner M."/>
            <person name="White J.J."/>
            <person name="Wilichowski E."/>
            <person name="Wortmann S.B."/>
            <person name="Casella E.B."/>
            <person name="Kitajima J.P."/>
            <person name="Kok F."/>
            <person name="Monteiro F."/>
            <person name="Muzny D.M."/>
            <person name="Bamshad M."/>
            <person name="Gibbs R.A."/>
            <person name="Sutton V.R."/>
            <person name="Van Esch H."/>
            <person name="Brunetti-Pierri N."/>
            <person name="Hildebrandt F."/>
            <person name="Brautbar A."/>
            <person name="Van den Veyver I.B."/>
            <person name="Glass I."/>
            <person name="Lessel D."/>
            <person name="Lyon G.J."/>
            <person name="Lupski J.R."/>
        </authorList>
    </citation>
    <scope>FUNCTION</scope>
    <scope>TISSUE SPECIFICITY</scope>
    <scope>VARIANTS NEDBAVC GLN-93; SER-167; GLY-382; LYS-419; VAL-467; MET-731 AND MET-1094</scope>
</reference>
<reference key="8">
    <citation type="journal article" date="2020" name="Genet. Med.">
        <title>Pathogenic variants in the DEAH-box RNA helicase DHX37 are a frequent cause of 46,XY gonadal dysgenesis and 46,XY testicular regression syndrome.</title>
        <authorList>
            <person name="McElreavey K."/>
            <person name="Jorgensen A."/>
            <person name="Eozenou C."/>
            <person name="Merel T."/>
            <person name="Bignon-Topalovic J."/>
            <person name="Tan D.S."/>
            <person name="Houzelstein D."/>
            <person name="Buonocore F."/>
            <person name="Warr N."/>
            <person name="Kay R.G.G."/>
            <person name="Peycelon M."/>
            <person name="Siffroi J.P."/>
            <person name="Mazen I."/>
            <person name="Achermann J.C."/>
            <person name="Shcherbak Y."/>
            <person name="Leger J."/>
            <person name="Sallai A."/>
            <person name="Carel J.C."/>
            <person name="Martinerie L."/>
            <person name="Le Ru R."/>
            <person name="Conway G.S."/>
            <person name="Mignot B."/>
            <person name="Van Maldergem L."/>
            <person name="Bertalan R."/>
            <person name="Globa E."/>
            <person name="Brauner R."/>
            <person name="Jauch R."/>
            <person name="Nef S."/>
            <person name="Greenfield A."/>
            <person name="Bashamboo A."/>
        </authorList>
    </citation>
    <scope>FUNCTION</scope>
    <scope>SUBCELLULAR LOCATION</scope>
    <scope>TISSUE SPECIFICITY</scope>
    <scope>VARIANTS SRXY11 MET-304; GLN-308; LEU-334; TRP-334; LEU-626; GLN-674 AND GLU-1030</scope>
</reference>
<reference evidence="13" key="9">
    <citation type="journal article" date="2021" name="Science">
        <title>Nucleolar maturation of the human small subunit processome.</title>
        <authorList>
            <person name="Singh S."/>
            <person name="Vanden Broeck A."/>
            <person name="Miller L."/>
            <person name="Chaker-Margot M."/>
            <person name="Klinge S."/>
        </authorList>
    </citation>
    <scope>STRUCTURE BY ELECTRON MICROSCOPY (2.70 ANGSTROMS)</scope>
    <scope>FUNCTION</scope>
    <scope>SUBCELLULAR LOCATION</scope>
    <scope>SUBUNIT</scope>
</reference>
<protein>
    <recommendedName>
        <fullName>Probable ATP-dependent RNA helicase DHX37</fullName>
        <ecNumber evidence="6">3.6.4.13</ecNumber>
    </recommendedName>
    <alternativeName>
        <fullName>DEAH box protein 37</fullName>
    </alternativeName>
</protein>